<organism>
    <name type="scientific">Escherichia coli (strain SMS-3-5 / SECEC)</name>
    <dbReference type="NCBI Taxonomy" id="439855"/>
    <lineage>
        <taxon>Bacteria</taxon>
        <taxon>Pseudomonadati</taxon>
        <taxon>Pseudomonadota</taxon>
        <taxon>Gammaproteobacteria</taxon>
        <taxon>Enterobacterales</taxon>
        <taxon>Enterobacteriaceae</taxon>
        <taxon>Escherichia</taxon>
    </lineage>
</organism>
<keyword id="KW-0456">Lyase</keyword>
<keyword id="KW-0474">Menaquinone biosynthesis</keyword>
<accession>B1LLL8</accession>
<protein>
    <recommendedName>
        <fullName evidence="1">2-succinyl-6-hydroxy-2,4-cyclohexadiene-1-carboxylate synthase</fullName>
        <shortName evidence="1">SHCHC synthase</shortName>
        <ecNumber evidence="1">4.2.99.20</ecNumber>
    </recommendedName>
</protein>
<proteinExistence type="inferred from homology"/>
<gene>
    <name evidence="1" type="primary">menH</name>
    <name type="ordered locus">EcSMS35_2418</name>
</gene>
<comment type="function">
    <text evidence="1">Catalyzes a proton abstraction reaction that results in 2,5-elimination of pyruvate from 2-succinyl-5-enolpyruvyl-6-hydroxy-3-cyclohexene-1-carboxylate (SEPHCHC) and the formation of 2-succinyl-6-hydroxy-2,4-cyclohexadiene-1-carboxylate (SHCHC).</text>
</comment>
<comment type="catalytic activity">
    <reaction evidence="1">
        <text>5-enolpyruvoyl-6-hydroxy-2-succinyl-cyclohex-3-ene-1-carboxylate = (1R,6R)-6-hydroxy-2-succinyl-cyclohexa-2,4-diene-1-carboxylate + pyruvate</text>
        <dbReference type="Rhea" id="RHEA:25597"/>
        <dbReference type="ChEBI" id="CHEBI:15361"/>
        <dbReference type="ChEBI" id="CHEBI:58689"/>
        <dbReference type="ChEBI" id="CHEBI:58818"/>
        <dbReference type="EC" id="4.2.99.20"/>
    </reaction>
</comment>
<comment type="pathway">
    <text evidence="1">Quinol/quinone metabolism; 1,4-dihydroxy-2-naphthoate biosynthesis; 1,4-dihydroxy-2-naphthoate from chorismate: step 3/7.</text>
</comment>
<comment type="pathway">
    <text evidence="1">Quinol/quinone metabolism; menaquinone biosynthesis.</text>
</comment>
<comment type="subunit">
    <text evidence="1">Monomer.</text>
</comment>
<comment type="similarity">
    <text evidence="1">Belongs to the AB hydrolase superfamily. MenH family.</text>
</comment>
<feature type="chain" id="PRO_0000341907" description="2-succinyl-6-hydroxy-2,4-cyclohexadiene-1-carboxylate synthase">
    <location>
        <begin position="1"/>
        <end position="252"/>
    </location>
</feature>
<name>MENH_ECOSM</name>
<evidence type="ECO:0000255" key="1">
    <source>
        <dbReference type="HAMAP-Rule" id="MF_01660"/>
    </source>
</evidence>
<sequence length="252" mass="27657">MILHAQAKHGKPGLPWLVFLHGFSGDCHEWQEVGEVFADYSRLYVDLPGHGGSAAISVDGFDDVTGLLCKTLVSYNILDFWLVGYSLGGRVAMMAACQGLAGLCGVVVEGGHPGLQNAEQRTQRQRSDRQWAQRFRTEPLTAVFADWYQQPVFASLNDEQRRELVALRSNNNGATLAAMLEATSLAVQPDLRANLSARTFAFYYLCGERDSKFRALAAELAAECHVIPRAGHNAHRENPAGVIASLAQILRF</sequence>
<dbReference type="EC" id="4.2.99.20" evidence="1"/>
<dbReference type="EMBL" id="CP000970">
    <property type="protein sequence ID" value="ACB15893.1"/>
    <property type="molecule type" value="Genomic_DNA"/>
</dbReference>
<dbReference type="RefSeq" id="WP_000600538.1">
    <property type="nucleotide sequence ID" value="NC_010498.1"/>
</dbReference>
<dbReference type="SMR" id="B1LLL8"/>
<dbReference type="ESTHER" id="ecoli-YFBB">
    <property type="family name" value="MenH_SHCHC"/>
</dbReference>
<dbReference type="MEROPS" id="S33.996"/>
<dbReference type="KEGG" id="ecm:EcSMS35_2418"/>
<dbReference type="HOGENOM" id="CLU_020336_38_2_6"/>
<dbReference type="UniPathway" id="UPA00079"/>
<dbReference type="UniPathway" id="UPA01057">
    <property type="reaction ID" value="UER00900"/>
</dbReference>
<dbReference type="Proteomes" id="UP000007011">
    <property type="component" value="Chromosome"/>
</dbReference>
<dbReference type="GO" id="GO:0070205">
    <property type="term" value="F:2-succinyl-6-hydroxy-2,4-cyclohexadiene-1-carboxylate synthase activity"/>
    <property type="evidence" value="ECO:0007669"/>
    <property type="project" value="UniProtKB-UniRule"/>
</dbReference>
<dbReference type="GO" id="GO:0009234">
    <property type="term" value="P:menaquinone biosynthetic process"/>
    <property type="evidence" value="ECO:0007669"/>
    <property type="project" value="UniProtKB-UniRule"/>
</dbReference>
<dbReference type="FunFam" id="3.40.50.1820:FF:000038">
    <property type="entry name" value="2-succinyl-6-hydroxy-2,4-cyclohexadiene-1-carboxylate synthase"/>
    <property type="match status" value="1"/>
</dbReference>
<dbReference type="Gene3D" id="3.40.50.1820">
    <property type="entry name" value="alpha/beta hydrolase"/>
    <property type="match status" value="1"/>
</dbReference>
<dbReference type="HAMAP" id="MF_01660">
    <property type="entry name" value="MenH"/>
    <property type="match status" value="1"/>
</dbReference>
<dbReference type="InterPro" id="IPR000073">
    <property type="entry name" value="AB_hydrolase_1"/>
</dbReference>
<dbReference type="InterPro" id="IPR029058">
    <property type="entry name" value="AB_hydrolase_fold"/>
</dbReference>
<dbReference type="InterPro" id="IPR022485">
    <property type="entry name" value="SHCHC_synthase_MenH"/>
</dbReference>
<dbReference type="NCBIfam" id="TIGR03695">
    <property type="entry name" value="menH_SHCHC"/>
    <property type="match status" value="1"/>
</dbReference>
<dbReference type="NCBIfam" id="NF008340">
    <property type="entry name" value="PRK11126.1"/>
    <property type="match status" value="1"/>
</dbReference>
<dbReference type="PANTHER" id="PTHR42916">
    <property type="entry name" value="2-SUCCINYL-5-ENOLPYRUVYL-6-HYDROXY-3-CYCLOHEXENE-1-CARBOXYLATE SYNTHASE"/>
    <property type="match status" value="1"/>
</dbReference>
<dbReference type="PANTHER" id="PTHR42916:SF1">
    <property type="entry name" value="PROTEIN PHYLLO, CHLOROPLASTIC"/>
    <property type="match status" value="1"/>
</dbReference>
<dbReference type="Pfam" id="PF12697">
    <property type="entry name" value="Abhydrolase_6"/>
    <property type="match status" value="1"/>
</dbReference>
<dbReference type="SUPFAM" id="SSF53474">
    <property type="entry name" value="alpha/beta-Hydrolases"/>
    <property type="match status" value="1"/>
</dbReference>
<reference key="1">
    <citation type="journal article" date="2008" name="J. Bacteriol.">
        <title>Insights into the environmental resistance gene pool from the genome sequence of the multidrug-resistant environmental isolate Escherichia coli SMS-3-5.</title>
        <authorList>
            <person name="Fricke W.F."/>
            <person name="Wright M.S."/>
            <person name="Lindell A.H."/>
            <person name="Harkins D.M."/>
            <person name="Baker-Austin C."/>
            <person name="Ravel J."/>
            <person name="Stepanauskas R."/>
        </authorList>
    </citation>
    <scope>NUCLEOTIDE SEQUENCE [LARGE SCALE GENOMIC DNA]</scope>
    <source>
        <strain>SMS-3-5 / SECEC</strain>
    </source>
</reference>